<gene>
    <name evidence="1" type="primary">luxS</name>
    <name type="ordered locus">Shal_3188</name>
</gene>
<sequence length="169" mass="18737">MPLLDSFTVDHTRMNAPAVRIAKSMVTPKGDTITVFDLRFCVPNKEILSERGIHTLEHLFAGFMREHLNGDSVEIIDISPMGCRTGFYMSLIGAPTESIVADSWLAAMQDVLKVAVQSDIPELNEYQCGTFEMHSLEQAQEIARNIIASGINVNRNDDLSLSEEILKGL</sequence>
<feature type="chain" id="PRO_1000075459" description="S-ribosylhomocysteine lyase">
    <location>
        <begin position="1"/>
        <end position="169"/>
    </location>
</feature>
<feature type="binding site" evidence="1">
    <location>
        <position position="54"/>
    </location>
    <ligand>
        <name>Fe cation</name>
        <dbReference type="ChEBI" id="CHEBI:24875"/>
    </ligand>
</feature>
<feature type="binding site" evidence="1">
    <location>
        <position position="58"/>
    </location>
    <ligand>
        <name>Fe cation</name>
        <dbReference type="ChEBI" id="CHEBI:24875"/>
    </ligand>
</feature>
<feature type="binding site" evidence="1">
    <location>
        <position position="128"/>
    </location>
    <ligand>
        <name>Fe cation</name>
        <dbReference type="ChEBI" id="CHEBI:24875"/>
    </ligand>
</feature>
<reference key="1">
    <citation type="submission" date="2008-01" db="EMBL/GenBank/DDBJ databases">
        <title>Complete sequence of Shewanella halifaxensis HAW-EB4.</title>
        <authorList>
            <consortium name="US DOE Joint Genome Institute"/>
            <person name="Copeland A."/>
            <person name="Lucas S."/>
            <person name="Lapidus A."/>
            <person name="Glavina del Rio T."/>
            <person name="Dalin E."/>
            <person name="Tice H."/>
            <person name="Bruce D."/>
            <person name="Goodwin L."/>
            <person name="Pitluck S."/>
            <person name="Sims D."/>
            <person name="Brettin T."/>
            <person name="Detter J.C."/>
            <person name="Han C."/>
            <person name="Kuske C.R."/>
            <person name="Schmutz J."/>
            <person name="Larimer F."/>
            <person name="Land M."/>
            <person name="Hauser L."/>
            <person name="Kyrpides N."/>
            <person name="Kim E."/>
            <person name="Zhao J.-S."/>
            <person name="Richardson P."/>
        </authorList>
    </citation>
    <scope>NUCLEOTIDE SEQUENCE [LARGE SCALE GENOMIC DNA]</scope>
    <source>
        <strain>HAW-EB4</strain>
    </source>
</reference>
<name>LUXS_SHEHH</name>
<proteinExistence type="inferred from homology"/>
<accession>B0TR04</accession>
<dbReference type="EC" id="4.4.1.21" evidence="1"/>
<dbReference type="EMBL" id="CP000931">
    <property type="protein sequence ID" value="ABZ77735.1"/>
    <property type="molecule type" value="Genomic_DNA"/>
</dbReference>
<dbReference type="RefSeq" id="WP_012278258.1">
    <property type="nucleotide sequence ID" value="NC_010334.1"/>
</dbReference>
<dbReference type="SMR" id="B0TR04"/>
<dbReference type="STRING" id="458817.Shal_3188"/>
<dbReference type="KEGG" id="shl:Shal_3188"/>
<dbReference type="eggNOG" id="COG1854">
    <property type="taxonomic scope" value="Bacteria"/>
</dbReference>
<dbReference type="HOGENOM" id="CLU_107531_2_0_6"/>
<dbReference type="OrthoDB" id="9788129at2"/>
<dbReference type="Proteomes" id="UP000001317">
    <property type="component" value="Chromosome"/>
</dbReference>
<dbReference type="GO" id="GO:0005506">
    <property type="term" value="F:iron ion binding"/>
    <property type="evidence" value="ECO:0007669"/>
    <property type="project" value="InterPro"/>
</dbReference>
<dbReference type="GO" id="GO:0043768">
    <property type="term" value="F:S-ribosylhomocysteine lyase activity"/>
    <property type="evidence" value="ECO:0007669"/>
    <property type="project" value="UniProtKB-UniRule"/>
</dbReference>
<dbReference type="GO" id="GO:0009372">
    <property type="term" value="P:quorum sensing"/>
    <property type="evidence" value="ECO:0007669"/>
    <property type="project" value="UniProtKB-UniRule"/>
</dbReference>
<dbReference type="Gene3D" id="3.30.1360.80">
    <property type="entry name" value="S-ribosylhomocysteinase (LuxS)"/>
    <property type="match status" value="1"/>
</dbReference>
<dbReference type="HAMAP" id="MF_00091">
    <property type="entry name" value="LuxS"/>
    <property type="match status" value="1"/>
</dbReference>
<dbReference type="InterPro" id="IPR037005">
    <property type="entry name" value="LuxS_sf"/>
</dbReference>
<dbReference type="InterPro" id="IPR011249">
    <property type="entry name" value="Metalloenz_LuxS/M16"/>
</dbReference>
<dbReference type="InterPro" id="IPR003815">
    <property type="entry name" value="S-ribosylhomocysteinase"/>
</dbReference>
<dbReference type="NCBIfam" id="NF002602">
    <property type="entry name" value="PRK02260.1-2"/>
    <property type="match status" value="1"/>
</dbReference>
<dbReference type="PANTHER" id="PTHR35799">
    <property type="entry name" value="S-RIBOSYLHOMOCYSTEINE LYASE"/>
    <property type="match status" value="1"/>
</dbReference>
<dbReference type="PANTHER" id="PTHR35799:SF1">
    <property type="entry name" value="S-RIBOSYLHOMOCYSTEINE LYASE"/>
    <property type="match status" value="1"/>
</dbReference>
<dbReference type="Pfam" id="PF02664">
    <property type="entry name" value="LuxS"/>
    <property type="match status" value="1"/>
</dbReference>
<dbReference type="PIRSF" id="PIRSF006160">
    <property type="entry name" value="AI2"/>
    <property type="match status" value="1"/>
</dbReference>
<dbReference type="PRINTS" id="PR01487">
    <property type="entry name" value="LUXSPROTEIN"/>
</dbReference>
<dbReference type="SUPFAM" id="SSF63411">
    <property type="entry name" value="LuxS/MPP-like metallohydrolase"/>
    <property type="match status" value="1"/>
</dbReference>
<protein>
    <recommendedName>
        <fullName evidence="1">S-ribosylhomocysteine lyase</fullName>
        <ecNumber evidence="1">4.4.1.21</ecNumber>
    </recommendedName>
    <alternativeName>
        <fullName evidence="1">AI-2 synthesis protein</fullName>
    </alternativeName>
    <alternativeName>
        <fullName evidence="1">Autoinducer-2 production protein LuxS</fullName>
    </alternativeName>
</protein>
<keyword id="KW-0071">Autoinducer synthesis</keyword>
<keyword id="KW-0408">Iron</keyword>
<keyword id="KW-0456">Lyase</keyword>
<keyword id="KW-0479">Metal-binding</keyword>
<keyword id="KW-0673">Quorum sensing</keyword>
<comment type="function">
    <text evidence="1">Involved in the synthesis of autoinducer 2 (AI-2) which is secreted by bacteria and is used to communicate both the cell density and the metabolic potential of the environment. The regulation of gene expression in response to changes in cell density is called quorum sensing. Catalyzes the transformation of S-ribosylhomocysteine (RHC) to homocysteine (HC) and 4,5-dihydroxy-2,3-pentadione (DPD).</text>
</comment>
<comment type="catalytic activity">
    <reaction evidence="1">
        <text>S-(5-deoxy-D-ribos-5-yl)-L-homocysteine = (S)-4,5-dihydroxypentane-2,3-dione + L-homocysteine</text>
        <dbReference type="Rhea" id="RHEA:17753"/>
        <dbReference type="ChEBI" id="CHEBI:29484"/>
        <dbReference type="ChEBI" id="CHEBI:58195"/>
        <dbReference type="ChEBI" id="CHEBI:58199"/>
        <dbReference type="EC" id="4.4.1.21"/>
    </reaction>
</comment>
<comment type="cofactor">
    <cofactor evidence="1">
        <name>Fe cation</name>
        <dbReference type="ChEBI" id="CHEBI:24875"/>
    </cofactor>
    <text evidence="1">Binds 1 Fe cation per subunit.</text>
</comment>
<comment type="subunit">
    <text evidence="1">Homodimer.</text>
</comment>
<comment type="similarity">
    <text evidence="1">Belongs to the LuxS family.</text>
</comment>
<evidence type="ECO:0000255" key="1">
    <source>
        <dbReference type="HAMAP-Rule" id="MF_00091"/>
    </source>
</evidence>
<organism>
    <name type="scientific">Shewanella halifaxensis (strain HAW-EB4)</name>
    <dbReference type="NCBI Taxonomy" id="458817"/>
    <lineage>
        <taxon>Bacteria</taxon>
        <taxon>Pseudomonadati</taxon>
        <taxon>Pseudomonadota</taxon>
        <taxon>Gammaproteobacteria</taxon>
        <taxon>Alteromonadales</taxon>
        <taxon>Shewanellaceae</taxon>
        <taxon>Shewanella</taxon>
    </lineage>
</organism>